<comment type="function">
    <text evidence="3">Involved in the hydrocarbon hydroxylating system, which transfers electrons from NADH to rubredoxin reductase and then through rubredoxin to alkane 1 monooxygenase.</text>
</comment>
<comment type="cofactor">
    <cofactor evidence="4">
        <name>Fe(3+)</name>
        <dbReference type="ChEBI" id="CHEBI:29034"/>
    </cofactor>
    <text evidence="4">Binds 1 Fe(3+) ion per subunit.</text>
</comment>
<comment type="pathway">
    <text>Hydrocarbon metabolism; alkane degradation.</text>
</comment>
<comment type="interaction">
    <interactant intactId="EBI-15647891">
        <id>Q9HTK8</id>
    </interactant>
    <interactant intactId="EBI-15647858">
        <id>Q9HTK9</id>
        <label>alkT</label>
    </interactant>
    <organismsDiffer>false</organismsDiffer>
    <experiments>2</experiments>
</comment>
<comment type="subcellular location">
    <subcellularLocation>
        <location>Cytoplasm</location>
    </subcellularLocation>
</comment>
<comment type="induction">
    <text evidence="2">Constitutively expressed.</text>
</comment>
<comment type="similarity">
    <text evidence="5">Belongs to the rubredoxin family.</text>
</comment>
<reference key="1">
    <citation type="journal article" date="2000" name="Nature">
        <title>Complete genome sequence of Pseudomonas aeruginosa PAO1, an opportunistic pathogen.</title>
        <authorList>
            <person name="Stover C.K."/>
            <person name="Pham X.-Q.T."/>
            <person name="Erwin A.L."/>
            <person name="Mizoguchi S.D."/>
            <person name="Warrener P."/>
            <person name="Hickey M.J."/>
            <person name="Brinkman F.S.L."/>
            <person name="Hufnagle W.O."/>
            <person name="Kowalik D.J."/>
            <person name="Lagrou M."/>
            <person name="Garber R.L."/>
            <person name="Goltry L."/>
            <person name="Tolentino E."/>
            <person name="Westbrock-Wadman S."/>
            <person name="Yuan Y."/>
            <person name="Brody L.L."/>
            <person name="Coulter S.N."/>
            <person name="Folger K.R."/>
            <person name="Kas A."/>
            <person name="Larbig K."/>
            <person name="Lim R.M."/>
            <person name="Smith K.A."/>
            <person name="Spencer D.H."/>
            <person name="Wong G.K.-S."/>
            <person name="Wu Z."/>
            <person name="Paulsen I.T."/>
            <person name="Reizer J."/>
            <person name="Saier M.H. Jr."/>
            <person name="Hancock R.E.W."/>
            <person name="Lory S."/>
            <person name="Olson M.V."/>
        </authorList>
    </citation>
    <scope>NUCLEOTIDE SEQUENCE [LARGE SCALE GENOMIC DNA]</scope>
    <source>
        <strain>ATCC 15692 / DSM 22644 / CIP 104116 / JCM 14847 / LMG 12228 / 1C / PRS 101 / PAO1</strain>
    </source>
</reference>
<reference key="2">
    <citation type="journal article" date="2003" name="Antonie Van Leeuwenhoek">
        <title>Functional characterization of genes involved in alkane oxidation by Pseudomonas aeruginosa.</title>
        <authorList>
            <person name="Smits T.H."/>
            <person name="Witholt B."/>
            <person name="van Beilen J.B."/>
        </authorList>
    </citation>
    <scope>FUNCTION IN ALKANE DEGRADATION</scope>
</reference>
<reference key="3">
    <citation type="journal article" date="2003" name="J. Bacteriol.">
        <title>Differential expression of the components of the two alkane hydroxylases from Pseudomonas aeruginosa.</title>
        <authorList>
            <person name="Marin M.M."/>
            <person name="Yuste L."/>
            <person name="Rojo F."/>
        </authorList>
    </citation>
    <scope>INDUCTION</scope>
    <source>
        <strain>ATCC 15692 / DSM 22644 / CIP 104116 / JCM 14847 / LMG 12228 / 1C / PRS 101 / PAO1</strain>
    </source>
</reference>
<reference key="4">
    <citation type="journal article" date="2007" name="Proc. Natl. Acad. Sci. U.S.A.">
        <title>Crystal structure of the electron transfer complex rubredoxin rubredoxin reductase of Pseudomonas aeruginosa.</title>
        <authorList>
            <person name="Hagelueken G."/>
            <person name="Wiehlmann L."/>
            <person name="Adams T.M."/>
            <person name="Kolmar H."/>
            <person name="Heinz D.W."/>
            <person name="Tummler B."/>
            <person name="Schubert W.D."/>
        </authorList>
    </citation>
    <scope>X-RAY CRYSTALLOGRAPHY (2.4 ANGSTROMS) IN COMPLEX WITH RUBREDOXIN REDUCTASE AND IRON</scope>
    <scope>COFACTOR</scope>
    <source>
        <strain>ATCC 15692 / DSM 22644 / CIP 104116 / JCM 14847 / LMG 12228 / 1C / PRS 101 / PAO1</strain>
    </source>
</reference>
<name>RUBR2_PSEAE</name>
<accession>Q9HTK8</accession>
<dbReference type="EMBL" id="AE004091">
    <property type="protein sequence ID" value="AAG08735.1"/>
    <property type="molecule type" value="Genomic_DNA"/>
</dbReference>
<dbReference type="PIR" id="H82976">
    <property type="entry name" value="H82976"/>
</dbReference>
<dbReference type="RefSeq" id="NP_254037.1">
    <property type="nucleotide sequence ID" value="NC_002516.2"/>
</dbReference>
<dbReference type="RefSeq" id="WP_003098329.1">
    <property type="nucleotide sequence ID" value="NZ_QZGE01000020.1"/>
</dbReference>
<dbReference type="PDB" id="2V3B">
    <property type="method" value="X-ray"/>
    <property type="resolution" value="2.45 A"/>
    <property type="chains" value="B=1-55"/>
</dbReference>
<dbReference type="PDBsum" id="2V3B"/>
<dbReference type="SMR" id="Q9HTK8"/>
<dbReference type="IntAct" id="Q9HTK8">
    <property type="interactions" value="1"/>
</dbReference>
<dbReference type="STRING" id="208964.PA5350"/>
<dbReference type="PaxDb" id="208964-PA5350"/>
<dbReference type="DNASU" id="879561"/>
<dbReference type="GeneID" id="879561"/>
<dbReference type="KEGG" id="pae:PA5350"/>
<dbReference type="PATRIC" id="fig|208964.12.peg.5607"/>
<dbReference type="PseudoCAP" id="PA5350"/>
<dbReference type="HOGENOM" id="CLU_128747_1_1_6"/>
<dbReference type="InParanoid" id="Q9HTK8"/>
<dbReference type="OrthoDB" id="9800607at2"/>
<dbReference type="PhylomeDB" id="Q9HTK8"/>
<dbReference type="BioCyc" id="PAER208964:G1FZ6-5472-MONOMER"/>
<dbReference type="UniPathway" id="UPA00191"/>
<dbReference type="EvolutionaryTrace" id="Q9HTK8"/>
<dbReference type="Proteomes" id="UP000002438">
    <property type="component" value="Chromosome"/>
</dbReference>
<dbReference type="GO" id="GO:0005737">
    <property type="term" value="C:cytoplasm"/>
    <property type="evidence" value="ECO:0007669"/>
    <property type="project" value="UniProtKB-SubCell"/>
</dbReference>
<dbReference type="GO" id="GO:0009055">
    <property type="term" value="F:electron transfer activity"/>
    <property type="evidence" value="ECO:0000318"/>
    <property type="project" value="GO_Central"/>
</dbReference>
<dbReference type="GO" id="GO:0005506">
    <property type="term" value="F:iron ion binding"/>
    <property type="evidence" value="ECO:0007669"/>
    <property type="project" value="InterPro"/>
</dbReference>
<dbReference type="GO" id="GO:0043448">
    <property type="term" value="P:alkane catabolic process"/>
    <property type="evidence" value="ECO:0000318"/>
    <property type="project" value="GO_Central"/>
</dbReference>
<dbReference type="CDD" id="cd00730">
    <property type="entry name" value="rubredoxin"/>
    <property type="match status" value="1"/>
</dbReference>
<dbReference type="FunFam" id="2.20.28.10:FF:000001">
    <property type="entry name" value="Rubredoxin"/>
    <property type="match status" value="1"/>
</dbReference>
<dbReference type="Gene3D" id="2.20.28.10">
    <property type="match status" value="1"/>
</dbReference>
<dbReference type="InterPro" id="IPR024922">
    <property type="entry name" value="Rubredoxin"/>
</dbReference>
<dbReference type="InterPro" id="IPR024934">
    <property type="entry name" value="Rubredoxin-like_dom"/>
</dbReference>
<dbReference type="InterPro" id="IPR024935">
    <property type="entry name" value="Rubredoxin_dom"/>
</dbReference>
<dbReference type="InterPro" id="IPR050526">
    <property type="entry name" value="Rubredoxin_ET"/>
</dbReference>
<dbReference type="InterPro" id="IPR018527">
    <property type="entry name" value="Rubredoxin_Fe_BS"/>
</dbReference>
<dbReference type="PANTHER" id="PTHR47627">
    <property type="entry name" value="RUBREDOXIN"/>
    <property type="match status" value="1"/>
</dbReference>
<dbReference type="PANTHER" id="PTHR47627:SF1">
    <property type="entry name" value="RUBREDOXIN-1-RELATED"/>
    <property type="match status" value="1"/>
</dbReference>
<dbReference type="Pfam" id="PF00301">
    <property type="entry name" value="Rubredoxin"/>
    <property type="match status" value="1"/>
</dbReference>
<dbReference type="PIRSF" id="PIRSF000071">
    <property type="entry name" value="Rubredoxin"/>
    <property type="match status" value="1"/>
</dbReference>
<dbReference type="PRINTS" id="PR00163">
    <property type="entry name" value="RUBREDOXIN"/>
</dbReference>
<dbReference type="SUPFAM" id="SSF57802">
    <property type="entry name" value="Rubredoxin-like"/>
    <property type="match status" value="1"/>
</dbReference>
<dbReference type="PROSITE" id="PS00202">
    <property type="entry name" value="RUBREDOXIN"/>
    <property type="match status" value="1"/>
</dbReference>
<dbReference type="PROSITE" id="PS50903">
    <property type="entry name" value="RUBREDOXIN_LIKE"/>
    <property type="match status" value="1"/>
</dbReference>
<gene>
    <name type="primary">rubA2</name>
    <name type="synonym">alkG2</name>
    <name type="ordered locus">PA5350</name>
</gene>
<keyword id="KW-0002">3D-structure</keyword>
<keyword id="KW-0963">Cytoplasm</keyword>
<keyword id="KW-0249">Electron transport</keyword>
<keyword id="KW-0408">Iron</keyword>
<keyword id="KW-0479">Metal-binding</keyword>
<keyword id="KW-1185">Reference proteome</keyword>
<keyword id="KW-0813">Transport</keyword>
<organism>
    <name type="scientific">Pseudomonas aeruginosa (strain ATCC 15692 / DSM 22644 / CIP 104116 / JCM 14847 / LMG 12228 / 1C / PRS 101 / PAO1)</name>
    <dbReference type="NCBI Taxonomy" id="208964"/>
    <lineage>
        <taxon>Bacteria</taxon>
        <taxon>Pseudomonadati</taxon>
        <taxon>Pseudomonadota</taxon>
        <taxon>Gammaproteobacteria</taxon>
        <taxon>Pseudomonadales</taxon>
        <taxon>Pseudomonadaceae</taxon>
        <taxon>Pseudomonas</taxon>
    </lineage>
</organism>
<sequence length="55" mass="6174">MRKWQCVVCGFIYDEALGLPEEGIPAGTRWEDIPADWVCPDCGVGKIDFEMIEIA</sequence>
<protein>
    <recommendedName>
        <fullName>Rubredoxin-2</fullName>
        <shortName>Rdxs</shortName>
    </recommendedName>
</protein>
<feature type="chain" id="PRO_0000392232" description="Rubredoxin-2">
    <location>
        <begin position="1"/>
        <end position="55"/>
    </location>
</feature>
<feature type="domain" description="Rubredoxin-like" evidence="1">
    <location>
        <begin position="1"/>
        <end position="54"/>
    </location>
</feature>
<feature type="binding site" evidence="1 4">
    <location>
        <position position="6"/>
    </location>
    <ligand>
        <name>Fe cation</name>
        <dbReference type="ChEBI" id="CHEBI:24875"/>
    </ligand>
</feature>
<feature type="binding site" evidence="1 4">
    <location>
        <position position="9"/>
    </location>
    <ligand>
        <name>Fe cation</name>
        <dbReference type="ChEBI" id="CHEBI:24875"/>
    </ligand>
</feature>
<feature type="binding site" evidence="1 4">
    <location>
        <position position="39"/>
    </location>
    <ligand>
        <name>Fe cation</name>
        <dbReference type="ChEBI" id="CHEBI:24875"/>
    </ligand>
</feature>
<feature type="binding site" evidence="1 4">
    <location>
        <position position="42"/>
    </location>
    <ligand>
        <name>Fe cation</name>
        <dbReference type="ChEBI" id="CHEBI:24875"/>
    </ligand>
</feature>
<feature type="strand" evidence="6">
    <location>
        <begin position="3"/>
        <end position="6"/>
    </location>
</feature>
<feature type="turn" evidence="6">
    <location>
        <begin position="7"/>
        <end position="9"/>
    </location>
</feature>
<feature type="strand" evidence="6">
    <location>
        <begin position="12"/>
        <end position="14"/>
    </location>
</feature>
<feature type="turn" evidence="6">
    <location>
        <begin position="15"/>
        <end position="17"/>
    </location>
</feature>
<feature type="turn" evidence="6">
    <location>
        <begin position="20"/>
        <end position="23"/>
    </location>
</feature>
<feature type="helix" evidence="6">
    <location>
        <begin position="30"/>
        <end position="32"/>
    </location>
</feature>
<feature type="turn" evidence="6">
    <location>
        <begin position="40"/>
        <end position="42"/>
    </location>
</feature>
<feature type="helix" evidence="6">
    <location>
        <begin position="46"/>
        <end position="48"/>
    </location>
</feature>
<feature type="strand" evidence="6">
    <location>
        <begin position="49"/>
        <end position="51"/>
    </location>
</feature>
<proteinExistence type="evidence at protein level"/>
<evidence type="ECO:0000255" key="1">
    <source>
        <dbReference type="PROSITE-ProRule" id="PRU00241"/>
    </source>
</evidence>
<evidence type="ECO:0000269" key="2">
    <source>
    </source>
</evidence>
<evidence type="ECO:0000269" key="3">
    <source>
    </source>
</evidence>
<evidence type="ECO:0000269" key="4">
    <source>
    </source>
</evidence>
<evidence type="ECO:0000305" key="5"/>
<evidence type="ECO:0007829" key="6">
    <source>
        <dbReference type="PDB" id="2V3B"/>
    </source>
</evidence>